<keyword id="KW-0046">Antibiotic resistance</keyword>
<keyword id="KW-1003">Cell membrane</keyword>
<keyword id="KW-0472">Membrane</keyword>
<keyword id="KW-1185">Reference proteome</keyword>
<keyword id="KW-0812">Transmembrane</keyword>
<keyword id="KW-1133">Transmembrane helix</keyword>
<keyword id="KW-0813">Transport</keyword>
<feature type="chain" id="PRO_0000173313" description="Probable actinorhodin transporter">
    <location>
        <begin position="1"/>
        <end position="578"/>
    </location>
</feature>
<feature type="transmembrane region" description="Helical" evidence="1">
    <location>
        <begin position="78"/>
        <end position="98"/>
    </location>
</feature>
<feature type="transmembrane region" description="Helical" evidence="1">
    <location>
        <begin position="109"/>
        <end position="129"/>
    </location>
</feature>
<feature type="transmembrane region" description="Helical" evidence="1">
    <location>
        <begin position="135"/>
        <end position="155"/>
    </location>
</feature>
<feature type="transmembrane region" description="Helical" evidence="1">
    <location>
        <begin position="170"/>
        <end position="190"/>
    </location>
</feature>
<feature type="transmembrane region" description="Helical" evidence="1">
    <location>
        <begin position="202"/>
        <end position="222"/>
    </location>
</feature>
<feature type="transmembrane region" description="Helical" evidence="1">
    <location>
        <begin position="232"/>
        <end position="252"/>
    </location>
</feature>
<feature type="transmembrane region" description="Helical" evidence="1">
    <location>
        <begin position="259"/>
        <end position="279"/>
    </location>
</feature>
<feature type="transmembrane region" description="Helical" evidence="1">
    <location>
        <begin position="306"/>
        <end position="326"/>
    </location>
</feature>
<feature type="transmembrane region" description="Helical" evidence="1">
    <location>
        <begin position="341"/>
        <end position="361"/>
    </location>
</feature>
<feature type="transmembrane region" description="Helical" evidence="1">
    <location>
        <begin position="369"/>
        <end position="389"/>
    </location>
</feature>
<feature type="transmembrane region" description="Helical" evidence="1">
    <location>
        <begin position="444"/>
        <end position="464"/>
    </location>
</feature>
<feature type="transmembrane region" description="Helical" evidence="1">
    <location>
        <begin position="546"/>
        <end position="566"/>
    </location>
</feature>
<feature type="region of interest" description="Disordered" evidence="2">
    <location>
        <begin position="1"/>
        <end position="33"/>
    </location>
</feature>
<name>ACT22_STRCO</name>
<sequence>MSSVEADEPDRATAPPSALLPEDGPGPDGTAAGPPPYARRWAALGVILGAEIMDLLDGTVMNVAAPAVRADLGGSLSVIQWITVGYTLAFAVLLVVGGRLGDIYGRKRMFVVGAVGFTAASVLCSVAAGPEMLTAARFLQGGLGALMIPQGLGLIKQMFPPKETAAAFGAFGPAIGLGAVLGPIVAGFLVDADLFGTGWRSVFLINLPIGVAVIVGAVLLLPEGKAPVRPKFDVVGMALVTSGLTLLIFPLVQGRERGWPAWAFVLMLAGAAVLVGFVAHELRQERRGGATLIELSLLRRSRYAAGLAVALVFFTGVSGMSLLLALHLQIGLGFSPTRAALTMTPWSVFLVVGAILTGAVLGSKFGRKALHGGLVVLALGVLIMLLTIGDQAGGLTSWELVPGIAVAGLGMGIMIGLLFDIALADVDKQEAGTASGVLTAVQQLGFTVGVAVLGTLFFGLLGSQATASVDDGASRARTELAAAGASTTEQDRLLADLRVCLRESASQQDSERTPDSCRNLQQARPAVAEATARAWRTAHTENFSTAMVRTLWVVIALLAVSFALAFRLPPKPREEEGF</sequence>
<organism>
    <name type="scientific">Streptomyces coelicolor (strain ATCC BAA-471 / A3(2) / M145)</name>
    <dbReference type="NCBI Taxonomy" id="100226"/>
    <lineage>
        <taxon>Bacteria</taxon>
        <taxon>Bacillati</taxon>
        <taxon>Actinomycetota</taxon>
        <taxon>Actinomycetes</taxon>
        <taxon>Kitasatosporales</taxon>
        <taxon>Streptomycetaceae</taxon>
        <taxon>Streptomyces</taxon>
        <taxon>Streptomyces albidoflavus group</taxon>
    </lineage>
</organism>
<protein>
    <recommendedName>
        <fullName>Probable actinorhodin transporter</fullName>
    </recommendedName>
</protein>
<reference key="1">
    <citation type="journal article" date="1991" name="Cell">
        <title>The act cluster contains regulatory and antibiotic export genes, direct targets for translational control by the bldA tRNA gene of Streptomyces.</title>
        <authorList>
            <person name="Fernandez-Moreno M.A."/>
            <person name="Caballero J.L."/>
            <person name="Hopwood D.A."/>
            <person name="Malpartida F."/>
        </authorList>
    </citation>
    <scope>NUCLEOTIDE SEQUENCE [GENOMIC DNA]</scope>
</reference>
<reference key="2">
    <citation type="journal article" date="2002" name="Nature">
        <title>Complete genome sequence of the model actinomycete Streptomyces coelicolor A3(2).</title>
        <authorList>
            <person name="Bentley S.D."/>
            <person name="Chater K.F."/>
            <person name="Cerdeno-Tarraga A.-M."/>
            <person name="Challis G.L."/>
            <person name="Thomson N.R."/>
            <person name="James K.D."/>
            <person name="Harris D.E."/>
            <person name="Quail M.A."/>
            <person name="Kieser H."/>
            <person name="Harper D."/>
            <person name="Bateman A."/>
            <person name="Brown S."/>
            <person name="Chandra G."/>
            <person name="Chen C.W."/>
            <person name="Collins M."/>
            <person name="Cronin A."/>
            <person name="Fraser A."/>
            <person name="Goble A."/>
            <person name="Hidalgo J."/>
            <person name="Hornsby T."/>
            <person name="Howarth S."/>
            <person name="Huang C.-H."/>
            <person name="Kieser T."/>
            <person name="Larke L."/>
            <person name="Murphy L.D."/>
            <person name="Oliver K."/>
            <person name="O'Neil S."/>
            <person name="Rabbinowitsch E."/>
            <person name="Rajandream M.A."/>
            <person name="Rutherford K.M."/>
            <person name="Rutter S."/>
            <person name="Seeger K."/>
            <person name="Saunders D."/>
            <person name="Sharp S."/>
            <person name="Squares R."/>
            <person name="Squares S."/>
            <person name="Taylor K."/>
            <person name="Warren T."/>
            <person name="Wietzorrek A."/>
            <person name="Woodward J.R."/>
            <person name="Barrell B.G."/>
            <person name="Parkhill J."/>
            <person name="Hopwood D.A."/>
        </authorList>
    </citation>
    <scope>NUCLEOTIDE SEQUENCE [LARGE SCALE GENOMIC DNA]</scope>
    <source>
        <strain>ATCC BAA-471 / A3(2) / M145</strain>
    </source>
</reference>
<evidence type="ECO:0000255" key="1"/>
<evidence type="ECO:0000256" key="2">
    <source>
        <dbReference type="SAM" id="MobiDB-lite"/>
    </source>
</evidence>
<evidence type="ECO:0000305" key="3"/>
<accession>P46105</accession>
<gene>
    <name type="primary">actII-2</name>
    <name type="ordered locus">SCO5083</name>
    <name type="ORF">SCBAC28G1.09</name>
</gene>
<comment type="function">
    <text>Promotes the efflux of actinorhodin.</text>
</comment>
<comment type="subcellular location">
    <subcellularLocation>
        <location>Cell membrane</location>
        <topology>Multi-pass membrane protein</topology>
    </subcellularLocation>
</comment>
<comment type="similarity">
    <text evidence="3">Belongs to the major facilitator superfamily. EmrB family.</text>
</comment>
<proteinExistence type="inferred from homology"/>
<dbReference type="EMBL" id="M64683">
    <property type="protein sequence ID" value="AAA26690.1"/>
    <property type="molecule type" value="Genomic_DNA"/>
</dbReference>
<dbReference type="EMBL" id="AL939122">
    <property type="protein sequence ID" value="CAC44196.1"/>
    <property type="molecule type" value="Genomic_DNA"/>
</dbReference>
<dbReference type="PIR" id="B40046">
    <property type="entry name" value="B40046"/>
</dbReference>
<dbReference type="RefSeq" id="NP_629233.1">
    <property type="nucleotide sequence ID" value="NC_003888.3"/>
</dbReference>
<dbReference type="RefSeq" id="WP_011030046.1">
    <property type="nucleotide sequence ID" value="NZ_VNID01000008.1"/>
</dbReference>
<dbReference type="SMR" id="P46105"/>
<dbReference type="STRING" id="100226.gene:17762732"/>
<dbReference type="TCDB" id="2.A.1.3.25">
    <property type="family name" value="the major facilitator superfamily (mfs)"/>
</dbReference>
<dbReference type="PaxDb" id="100226-SCO5083"/>
<dbReference type="KEGG" id="sco:SCO5083"/>
<dbReference type="PATRIC" id="fig|100226.15.peg.5163"/>
<dbReference type="eggNOG" id="COG0477">
    <property type="taxonomic scope" value="Bacteria"/>
</dbReference>
<dbReference type="HOGENOM" id="CLU_000960_28_2_11"/>
<dbReference type="InParanoid" id="P46105"/>
<dbReference type="OrthoDB" id="783189at2"/>
<dbReference type="PhylomeDB" id="P46105"/>
<dbReference type="Proteomes" id="UP000001973">
    <property type="component" value="Chromosome"/>
</dbReference>
<dbReference type="GO" id="GO:0016020">
    <property type="term" value="C:membrane"/>
    <property type="evidence" value="ECO:0000318"/>
    <property type="project" value="GO_Central"/>
</dbReference>
<dbReference type="GO" id="GO:0005886">
    <property type="term" value="C:plasma membrane"/>
    <property type="evidence" value="ECO:0007669"/>
    <property type="project" value="UniProtKB-SubCell"/>
</dbReference>
<dbReference type="GO" id="GO:0022857">
    <property type="term" value="F:transmembrane transporter activity"/>
    <property type="evidence" value="ECO:0007669"/>
    <property type="project" value="InterPro"/>
</dbReference>
<dbReference type="GO" id="GO:0046677">
    <property type="term" value="P:response to antibiotic"/>
    <property type="evidence" value="ECO:0007669"/>
    <property type="project" value="UniProtKB-KW"/>
</dbReference>
<dbReference type="CDD" id="cd17321">
    <property type="entry name" value="MFS_MMR_MDR_like"/>
    <property type="match status" value="1"/>
</dbReference>
<dbReference type="Gene3D" id="1.20.1720.10">
    <property type="entry name" value="Multidrug resistance protein D"/>
    <property type="match status" value="2"/>
</dbReference>
<dbReference type="InterPro" id="IPR011701">
    <property type="entry name" value="MFS"/>
</dbReference>
<dbReference type="InterPro" id="IPR020846">
    <property type="entry name" value="MFS_dom"/>
</dbReference>
<dbReference type="InterPro" id="IPR036259">
    <property type="entry name" value="MFS_trans_sf"/>
</dbReference>
<dbReference type="PANTHER" id="PTHR42718:SF39">
    <property type="entry name" value="ACTINORHODIN TRANSPORTER-RELATED"/>
    <property type="match status" value="1"/>
</dbReference>
<dbReference type="PANTHER" id="PTHR42718">
    <property type="entry name" value="MAJOR FACILITATOR SUPERFAMILY MULTIDRUG TRANSPORTER MFSC"/>
    <property type="match status" value="1"/>
</dbReference>
<dbReference type="Pfam" id="PF07690">
    <property type="entry name" value="MFS_1"/>
    <property type="match status" value="1"/>
</dbReference>
<dbReference type="SUPFAM" id="SSF103473">
    <property type="entry name" value="MFS general substrate transporter"/>
    <property type="match status" value="1"/>
</dbReference>
<dbReference type="PROSITE" id="PS50850">
    <property type="entry name" value="MFS"/>
    <property type="match status" value="1"/>
</dbReference>